<evidence type="ECO:0000250" key="1"/>
<evidence type="ECO:0000255" key="2"/>
<evidence type="ECO:0000305" key="3"/>
<sequence>MKFFVVIVFCAIFLSVSGDSDNMQDTCPTAPGEQSIFFINGYPCKNPTKITAQDFKSTKLTEAGDTDNYLQSNVTLLTALEFPGLNTLGLSVSRTDLERDGSVPFHSHPRSSEMLFVVKGVVFAGFVDTNNKIFQTVLQKGDVFVFPKGLLHFCLSGGFEPATAFSFYNSQNPGVVNIGEVFGIDQEHIKIMTRCLATGSGCRVTDGDEL</sequence>
<dbReference type="EMBL" id="AB010069">
    <property type="protein sequence ID" value="BAB10075.1"/>
    <property type="molecule type" value="Genomic_DNA"/>
</dbReference>
<dbReference type="EMBL" id="CP002688">
    <property type="protein sequence ID" value="AED97512.1"/>
    <property type="molecule type" value="Genomic_DNA"/>
</dbReference>
<dbReference type="EMBL" id="DQ447102">
    <property type="protein sequence ID" value="ABE66270.1"/>
    <property type="molecule type" value="mRNA"/>
</dbReference>
<dbReference type="RefSeq" id="NP_200983.1">
    <property type="nucleotide sequence ID" value="NM_125569.1"/>
</dbReference>
<dbReference type="SMR" id="Q9FLT3"/>
<dbReference type="FunCoup" id="Q9FLT3">
    <property type="interactions" value="44"/>
</dbReference>
<dbReference type="GlyGen" id="Q9FLT3">
    <property type="glycosylation" value="1 site"/>
</dbReference>
<dbReference type="PaxDb" id="3702-AT5G61750.1"/>
<dbReference type="ProteomicsDB" id="248523"/>
<dbReference type="EnsemblPlants" id="AT5G61750.1">
    <property type="protein sequence ID" value="AT5G61750.1"/>
    <property type="gene ID" value="AT5G61750"/>
</dbReference>
<dbReference type="GeneID" id="836297"/>
<dbReference type="Gramene" id="AT5G61750.1">
    <property type="protein sequence ID" value="AT5G61750.1"/>
    <property type="gene ID" value="AT5G61750"/>
</dbReference>
<dbReference type="KEGG" id="ath:AT5G61750"/>
<dbReference type="Araport" id="AT5G61750"/>
<dbReference type="TAIR" id="AT5G61750"/>
<dbReference type="eggNOG" id="ENOG502RXK8">
    <property type="taxonomic scope" value="Eukaryota"/>
</dbReference>
<dbReference type="HOGENOM" id="CLU_015790_0_1_1"/>
<dbReference type="InParanoid" id="Q9FLT3"/>
<dbReference type="OMA" id="LLHYCLN"/>
<dbReference type="PhylomeDB" id="Q9FLT3"/>
<dbReference type="PRO" id="PR:Q9FLT3"/>
<dbReference type="Proteomes" id="UP000006548">
    <property type="component" value="Chromosome 5"/>
</dbReference>
<dbReference type="ExpressionAtlas" id="Q9FLT3">
    <property type="expression patterns" value="baseline and differential"/>
</dbReference>
<dbReference type="GO" id="GO:0048046">
    <property type="term" value="C:apoplast"/>
    <property type="evidence" value="ECO:0007669"/>
    <property type="project" value="UniProtKB-SubCell"/>
</dbReference>
<dbReference type="GO" id="GO:0030145">
    <property type="term" value="F:manganese ion binding"/>
    <property type="evidence" value="ECO:0007669"/>
    <property type="project" value="InterPro"/>
</dbReference>
<dbReference type="CDD" id="cd02241">
    <property type="entry name" value="cupin_OxOx"/>
    <property type="match status" value="1"/>
</dbReference>
<dbReference type="FunFam" id="2.60.120.10:FF:000025">
    <property type="entry name" value="germin-like protein subfamily 2 member 1"/>
    <property type="match status" value="1"/>
</dbReference>
<dbReference type="Gene3D" id="2.60.120.10">
    <property type="entry name" value="Jelly Rolls"/>
    <property type="match status" value="1"/>
</dbReference>
<dbReference type="InterPro" id="IPR006045">
    <property type="entry name" value="Cupin_1"/>
</dbReference>
<dbReference type="InterPro" id="IPR001929">
    <property type="entry name" value="Germin"/>
</dbReference>
<dbReference type="InterPro" id="IPR019780">
    <property type="entry name" value="Germin_Mn-BS"/>
</dbReference>
<dbReference type="InterPro" id="IPR014710">
    <property type="entry name" value="RmlC-like_jellyroll"/>
</dbReference>
<dbReference type="InterPro" id="IPR011051">
    <property type="entry name" value="RmlC_Cupin_sf"/>
</dbReference>
<dbReference type="PANTHER" id="PTHR31238">
    <property type="entry name" value="GERMIN-LIKE PROTEIN SUBFAMILY 3 MEMBER 3"/>
    <property type="match status" value="1"/>
</dbReference>
<dbReference type="Pfam" id="PF00190">
    <property type="entry name" value="Cupin_1"/>
    <property type="match status" value="1"/>
</dbReference>
<dbReference type="PRINTS" id="PR00325">
    <property type="entry name" value="GERMIN"/>
</dbReference>
<dbReference type="SMART" id="SM00835">
    <property type="entry name" value="Cupin_1"/>
    <property type="match status" value="1"/>
</dbReference>
<dbReference type="SUPFAM" id="SSF51182">
    <property type="entry name" value="RmlC-like cupins"/>
    <property type="match status" value="1"/>
</dbReference>
<dbReference type="PROSITE" id="PS00725">
    <property type="entry name" value="GERMIN"/>
    <property type="match status" value="1"/>
</dbReference>
<organism>
    <name type="scientific">Arabidopsis thaliana</name>
    <name type="common">Mouse-ear cress</name>
    <dbReference type="NCBI Taxonomy" id="3702"/>
    <lineage>
        <taxon>Eukaryota</taxon>
        <taxon>Viridiplantae</taxon>
        <taxon>Streptophyta</taxon>
        <taxon>Embryophyta</taxon>
        <taxon>Tracheophyta</taxon>
        <taxon>Spermatophyta</taxon>
        <taxon>Magnoliopsida</taxon>
        <taxon>eudicotyledons</taxon>
        <taxon>Gunneridae</taxon>
        <taxon>Pentapetalae</taxon>
        <taxon>rosids</taxon>
        <taxon>malvids</taxon>
        <taxon>Brassicales</taxon>
        <taxon>Brassicaceae</taxon>
        <taxon>Camelineae</taxon>
        <taxon>Arabidopsis</taxon>
    </lineage>
</organism>
<accession>Q9FLT3</accession>
<accession>Q1PDG6</accession>
<protein>
    <recommendedName>
        <fullName>Germin-like protein subfamily 3 member 4</fullName>
    </recommendedName>
</protein>
<gene>
    <name type="ordered locus">At5g61750</name>
    <name type="ORF">MAC9.6</name>
    <name type="ORF">MAC9_50</name>
</gene>
<reference key="1">
    <citation type="journal article" date="1998" name="DNA Res.">
        <title>Structural analysis of Arabidopsis thaliana chromosome 5. IV. Sequence features of the regions of 1,456,315 bp covered by nineteen physically assigned P1 and TAC clones.</title>
        <authorList>
            <person name="Sato S."/>
            <person name="Kaneko T."/>
            <person name="Kotani H."/>
            <person name="Nakamura Y."/>
            <person name="Asamizu E."/>
            <person name="Miyajima N."/>
            <person name="Tabata S."/>
        </authorList>
    </citation>
    <scope>NUCLEOTIDE SEQUENCE [LARGE SCALE GENOMIC DNA]</scope>
    <source>
        <strain>cv. Columbia</strain>
    </source>
</reference>
<reference key="2">
    <citation type="journal article" date="2017" name="Plant J.">
        <title>Araport11: a complete reannotation of the Arabidopsis thaliana reference genome.</title>
        <authorList>
            <person name="Cheng C.Y."/>
            <person name="Krishnakumar V."/>
            <person name="Chan A.P."/>
            <person name="Thibaud-Nissen F."/>
            <person name="Schobel S."/>
            <person name="Town C.D."/>
        </authorList>
    </citation>
    <scope>GENOME REANNOTATION</scope>
    <source>
        <strain>cv. Columbia</strain>
    </source>
</reference>
<reference key="3">
    <citation type="journal article" date="2006" name="Plant Biotechnol. J.">
        <title>Simultaneous high-throughput recombinational cloning of open reading frames in closed and open configurations.</title>
        <authorList>
            <person name="Underwood B.A."/>
            <person name="Vanderhaeghen R."/>
            <person name="Whitford R."/>
            <person name="Town C.D."/>
            <person name="Hilson P."/>
        </authorList>
    </citation>
    <scope>NUCLEOTIDE SEQUENCE [LARGE SCALE MRNA]</scope>
    <source>
        <strain>cv. Columbia</strain>
    </source>
</reference>
<proteinExistence type="evidence at transcript level"/>
<comment type="function">
    <text>May play a role in plant defense. Probably has no oxalate oxidase activity even if the active site is conserved.</text>
</comment>
<comment type="subunit">
    <text evidence="1">Oligomer (believed to be a pentamer but probably hexamer).</text>
</comment>
<comment type="subcellular location">
    <subcellularLocation>
        <location evidence="1">Secreted</location>
        <location evidence="1">Extracellular space</location>
        <location evidence="1">Apoplast</location>
    </subcellularLocation>
</comment>
<comment type="similarity">
    <text evidence="3">Belongs to the germin family.</text>
</comment>
<feature type="signal peptide" evidence="2">
    <location>
        <begin position="1"/>
        <end position="18"/>
    </location>
</feature>
<feature type="chain" id="PRO_0000010829" description="Germin-like protein subfamily 3 member 4">
    <location>
        <begin position="19"/>
        <end position="210"/>
    </location>
</feature>
<feature type="domain" description="Cupin type-1" evidence="2">
    <location>
        <begin position="58"/>
        <end position="190"/>
    </location>
</feature>
<feature type="binding site" evidence="1">
    <location>
        <position position="106"/>
    </location>
    <ligand>
        <name>Mn(2+)</name>
        <dbReference type="ChEBI" id="CHEBI:29035"/>
    </ligand>
</feature>
<feature type="binding site" evidence="1">
    <location>
        <position position="108"/>
    </location>
    <ligand>
        <name>Mn(2+)</name>
        <dbReference type="ChEBI" id="CHEBI:29035"/>
    </ligand>
</feature>
<feature type="binding site" evidence="1">
    <location>
        <position position="113"/>
    </location>
    <ligand>
        <name>Mn(2+)</name>
        <dbReference type="ChEBI" id="CHEBI:29035"/>
    </ligand>
</feature>
<feature type="binding site" evidence="1">
    <location>
        <position position="152"/>
    </location>
    <ligand>
        <name>Mn(2+)</name>
        <dbReference type="ChEBI" id="CHEBI:29035"/>
    </ligand>
</feature>
<feature type="glycosylation site" description="N-linked (GlcNAc...) asparagine" evidence="2">
    <location>
        <position position="73"/>
    </location>
</feature>
<feature type="disulfide bond" evidence="1">
    <location>
        <begin position="27"/>
        <end position="44"/>
    </location>
</feature>
<keyword id="KW-0052">Apoplast</keyword>
<keyword id="KW-1015">Disulfide bond</keyword>
<keyword id="KW-0325">Glycoprotein</keyword>
<keyword id="KW-0464">Manganese</keyword>
<keyword id="KW-0479">Metal-binding</keyword>
<keyword id="KW-1185">Reference proteome</keyword>
<keyword id="KW-0964">Secreted</keyword>
<keyword id="KW-0732">Signal</keyword>
<name>GL34_ARATH</name>